<evidence type="ECO:0000250" key="1"/>
<evidence type="ECO:0000250" key="2">
    <source>
        <dbReference type="UniProtKB" id="P58405"/>
    </source>
</evidence>
<evidence type="ECO:0000250" key="3">
    <source>
        <dbReference type="UniProtKB" id="Q13033"/>
    </source>
</evidence>
<evidence type="ECO:0000250" key="4">
    <source>
        <dbReference type="UniProtKB" id="Q9ERG2"/>
    </source>
</evidence>
<evidence type="ECO:0000255" key="5"/>
<evidence type="ECO:0000256" key="6">
    <source>
        <dbReference type="SAM" id="MobiDB-lite"/>
    </source>
</evidence>
<evidence type="ECO:0000305" key="7"/>
<reference key="1">
    <citation type="submission" date="2007-04" db="EMBL/GenBank/DDBJ databases">
        <authorList>
            <consortium name="NIH - Mammalian Gene Collection (MGC) project"/>
        </authorList>
    </citation>
    <scope>NUCLEOTIDE SEQUENCE [LARGE SCALE MRNA]</scope>
    <source>
        <strain>Hereford</strain>
        <tissue>Basal ganglia</tissue>
    </source>
</reference>
<sequence>MDELAGGGGGGPAMASPPRQQQGPGGNMSLSPGGNGAAGGGGPPATEGAGPAAGPELSRPQQYTIPGILHYIQHEWARFEMERAHWEVERAELQARIAFLQGERKGQENLKKDLVRRIKMLEYALKQERAKYHKLKYGTELNQGDLKMPTFESEETKDTEAPTAPQNSQLTWKQGRQLLRQYLQEVGYTDTILDVRSQRVRSLLGLSNSEPNGSVETKNLEQILNGGESPKQKGQEIKRTSGDVLETFNFLENADDSDEEEENDMIEGIPEGKDKHRINKHKIGNEGLAADLTDDPDTEEALKEFDFLVTAEDGEGAGEARSSGDGTEWDKDDLSPTTEVWDVDQGLISKLKEQYKKERKGKKGVKRVNRTKLYDTIADLGDDELPLIPSGIINQSRSASTRMTDHEGARAEEAEPITFPSGGGKSFIMGSDDVLLSVLGLGDLADLTVTNDADYSYDLPANKDAFRKTWNPKYTLRSHFDGVRALAFHPVEPVLVTASEDHTLKLWNLQKTVPAKKSASLDVEPIYTFRAHIGPVLSLAISSNGEQCFSGGTDATIQWWNMPSPNVDPYDTYEPNVLAGTLIAHTDAVWGLAYSGIKNQLLSCSADGTVRLWNPQEKLPCICTYNGDKEHGIPTSVDFIGCDPAHMVTSFNTGSTVIYDLETSQSLVMLSSQMDSGLQSSNHINRVVSHPTLPVTITAHEDRHIKFFDNKTGKMIHSMVAHLDAVTSLAVDPNGIYLMSGSHDCSIRLWNLDSKTCVQEITAHRKKLDESIYDVAFHPSKAYIASAGADALAKVFV</sequence>
<name>STRN3_BOVIN</name>
<accession>A5D7H2</accession>
<feature type="chain" id="PRO_0000379881" description="Striatin-3">
    <location>
        <begin position="1"/>
        <end position="797"/>
    </location>
</feature>
<feature type="repeat" description="WD 1">
    <location>
        <begin position="478"/>
        <end position="517"/>
    </location>
</feature>
<feature type="repeat" description="WD 2">
    <location>
        <begin position="531"/>
        <end position="570"/>
    </location>
</feature>
<feature type="repeat" description="WD 3">
    <location>
        <begin position="584"/>
        <end position="623"/>
    </location>
</feature>
<feature type="repeat" description="WD 4">
    <location>
        <begin position="679"/>
        <end position="718"/>
    </location>
</feature>
<feature type="repeat" description="WD 5">
    <location>
        <begin position="721"/>
        <end position="760"/>
    </location>
</feature>
<feature type="repeat" description="WD 6">
    <location>
        <begin position="767"/>
        <end position="796"/>
    </location>
</feature>
<feature type="region of interest" description="Disordered" evidence="6">
    <location>
        <begin position="1"/>
        <end position="60"/>
    </location>
</feature>
<feature type="region of interest" description="Caveolin-binding" evidence="5">
    <location>
        <begin position="71"/>
        <end position="79"/>
    </location>
</feature>
<feature type="region of interest" description="Calmodulin-binding" evidence="5">
    <location>
        <begin position="166"/>
        <end position="183"/>
    </location>
</feature>
<feature type="region of interest" description="Disordered" evidence="6">
    <location>
        <begin position="313"/>
        <end position="336"/>
    </location>
</feature>
<feature type="coiled-coil region" evidence="5">
    <location>
        <begin position="77"/>
        <end position="136"/>
    </location>
</feature>
<feature type="compositionally biased region" description="Gly residues" evidence="6">
    <location>
        <begin position="1"/>
        <end position="12"/>
    </location>
</feature>
<feature type="compositionally biased region" description="Gly residues" evidence="6">
    <location>
        <begin position="33"/>
        <end position="43"/>
    </location>
</feature>
<feature type="compositionally biased region" description="Low complexity" evidence="6">
    <location>
        <begin position="44"/>
        <end position="55"/>
    </location>
</feature>
<feature type="modified residue" description="N-acetylmethionine" evidence="3">
    <location>
        <position position="1"/>
    </location>
</feature>
<feature type="modified residue" description="Phosphothreonine" evidence="2">
    <location>
        <position position="150"/>
    </location>
</feature>
<feature type="modified residue" description="Phosphoserine" evidence="4">
    <location>
        <position position="202"/>
    </location>
</feature>
<feature type="modified residue" description="Phosphoserine" evidence="3">
    <location>
        <position position="214"/>
    </location>
</feature>
<feature type="modified residue" description="Phosphoserine" evidence="3">
    <location>
        <position position="229"/>
    </location>
</feature>
<feature type="modified residue" description="Phosphoserine" evidence="3">
    <location>
        <position position="257"/>
    </location>
</feature>
<feature type="modified residue" description="Phosphoserine" evidence="4">
    <location>
        <position position="335"/>
    </location>
</feature>
<proteinExistence type="evidence at transcript level"/>
<keyword id="KW-0007">Acetylation</keyword>
<keyword id="KW-0112">Calmodulin-binding</keyword>
<keyword id="KW-0175">Coiled coil</keyword>
<keyword id="KW-0963">Cytoplasm</keyword>
<keyword id="KW-0472">Membrane</keyword>
<keyword id="KW-0597">Phosphoprotein</keyword>
<keyword id="KW-1185">Reference proteome</keyword>
<keyword id="KW-0677">Repeat</keyword>
<keyword id="KW-0853">WD repeat</keyword>
<comment type="function">
    <text evidence="3">Calmodulin-binding scaffolding protein which is the center of the striatin-interacting phosphatase and kinase (STRIPAK) complexes. STRIPAK complexes have critical roles in protein (de)phosphorylation and are regulators of multiple signaling pathways including Hippo, MAPK, nuclear receptor and cytoskeleton remodeling. Different types of STRIPAK complexes are involved in a variety of biological processes such as cell growth, differentiation, apoptosis, metabolism and immune regulation.</text>
</comment>
<comment type="subunit">
    <text evidence="3">Tetramerizes. Part of the core of STRIPAK complexes composed of PP2A catalytic and scaffolding subunits, the striatins (PP2A regulatory subunits), the striatin-associated proteins MOB4, STRIP1 and STRIP2, PDCD10 and members of the STE20 kinases, such as STK24 and STK26. The STRIPAK complex can be extended by adapter proteins such as SLMAP:SIKE1 or CTTNBP2NL. Interacts with CDC42BPB.</text>
</comment>
<comment type="subcellular location">
    <subcellularLocation>
        <location evidence="1">Cytoplasm</location>
    </subcellularLocation>
    <subcellularLocation>
        <location evidence="1">Membrane</location>
        <topology evidence="1">Peripheral membrane protein</topology>
    </subcellularLocation>
</comment>
<comment type="similarity">
    <text evidence="7">Belongs to the WD repeat striatin family.</text>
</comment>
<protein>
    <recommendedName>
        <fullName>Striatin-3</fullName>
    </recommendedName>
</protein>
<dbReference type="EMBL" id="BC140553">
    <property type="protein sequence ID" value="AAI40554.1"/>
    <property type="molecule type" value="mRNA"/>
</dbReference>
<dbReference type="RefSeq" id="NP_001091511.1">
    <property type="nucleotide sequence ID" value="NM_001098042.1"/>
</dbReference>
<dbReference type="SMR" id="A5D7H2"/>
<dbReference type="FunCoup" id="A5D7H2">
    <property type="interactions" value="3268"/>
</dbReference>
<dbReference type="STRING" id="9913.ENSBTAP00000029119"/>
<dbReference type="PaxDb" id="9913-ENSBTAP00000029119"/>
<dbReference type="Ensembl" id="ENSBTAT00000029119.6">
    <property type="protein sequence ID" value="ENSBTAP00000029119.5"/>
    <property type="gene ID" value="ENSBTAG00000021845.7"/>
</dbReference>
<dbReference type="GeneID" id="516375"/>
<dbReference type="KEGG" id="bta:516375"/>
<dbReference type="CTD" id="29966"/>
<dbReference type="VEuPathDB" id="HostDB:ENSBTAG00000021845"/>
<dbReference type="VGNC" id="VGNC:35425">
    <property type="gene designation" value="STRN3"/>
</dbReference>
<dbReference type="eggNOG" id="KOG0642">
    <property type="taxonomic scope" value="Eukaryota"/>
</dbReference>
<dbReference type="GeneTree" id="ENSGT00950000183095"/>
<dbReference type="HOGENOM" id="CLU_009108_2_0_1"/>
<dbReference type="InParanoid" id="A5D7H2"/>
<dbReference type="OMA" id="SKCSQEV"/>
<dbReference type="OrthoDB" id="727118at2759"/>
<dbReference type="TreeFam" id="TF313387"/>
<dbReference type="Proteomes" id="UP000009136">
    <property type="component" value="Chromosome 21"/>
</dbReference>
<dbReference type="Bgee" id="ENSBTAG00000021845">
    <property type="expression patterns" value="Expressed in longissimus thoracis muscle and 105 other cell types or tissues"/>
</dbReference>
<dbReference type="GO" id="GO:0005737">
    <property type="term" value="C:cytoplasm"/>
    <property type="evidence" value="ECO:0000250"/>
    <property type="project" value="UniProtKB"/>
</dbReference>
<dbReference type="GO" id="GO:0030425">
    <property type="term" value="C:dendrite"/>
    <property type="evidence" value="ECO:0000318"/>
    <property type="project" value="GO_Central"/>
</dbReference>
<dbReference type="GO" id="GO:0090443">
    <property type="term" value="C:FAR/SIN/STRIPAK complex"/>
    <property type="evidence" value="ECO:0000250"/>
    <property type="project" value="UniProtKB"/>
</dbReference>
<dbReference type="GO" id="GO:0005794">
    <property type="term" value="C:Golgi apparatus"/>
    <property type="evidence" value="ECO:0007669"/>
    <property type="project" value="Ensembl"/>
</dbReference>
<dbReference type="GO" id="GO:0005654">
    <property type="term" value="C:nucleoplasm"/>
    <property type="evidence" value="ECO:0000250"/>
    <property type="project" value="UniProtKB"/>
</dbReference>
<dbReference type="GO" id="GO:0005886">
    <property type="term" value="C:plasma membrane"/>
    <property type="evidence" value="ECO:0007669"/>
    <property type="project" value="Ensembl"/>
</dbReference>
<dbReference type="GO" id="GO:0098794">
    <property type="term" value="C:postsynapse"/>
    <property type="evidence" value="ECO:0007669"/>
    <property type="project" value="Ensembl"/>
</dbReference>
<dbReference type="GO" id="GO:0070016">
    <property type="term" value="F:armadillo repeat domain binding"/>
    <property type="evidence" value="ECO:0007669"/>
    <property type="project" value="Ensembl"/>
</dbReference>
<dbReference type="GO" id="GO:0005516">
    <property type="term" value="F:calmodulin binding"/>
    <property type="evidence" value="ECO:0000318"/>
    <property type="project" value="GO_Central"/>
</dbReference>
<dbReference type="GO" id="GO:0051721">
    <property type="term" value="F:protein phosphatase 2A binding"/>
    <property type="evidence" value="ECO:0000318"/>
    <property type="project" value="GO_Central"/>
</dbReference>
<dbReference type="GO" id="GO:0044877">
    <property type="term" value="F:protein-containing complex binding"/>
    <property type="evidence" value="ECO:0000318"/>
    <property type="project" value="GO_Central"/>
</dbReference>
<dbReference type="GO" id="GO:0030674">
    <property type="term" value="F:protein-macromolecule adaptor activity"/>
    <property type="evidence" value="ECO:0000314"/>
    <property type="project" value="UniProtKB"/>
</dbReference>
<dbReference type="GO" id="GO:0031267">
    <property type="term" value="F:small GTPase binding"/>
    <property type="evidence" value="ECO:0007669"/>
    <property type="project" value="Ensembl"/>
</dbReference>
<dbReference type="GO" id="GO:0045892">
    <property type="term" value="P:negative regulation of DNA-templated transcription"/>
    <property type="evidence" value="ECO:0000250"/>
    <property type="project" value="UniProtKB"/>
</dbReference>
<dbReference type="GO" id="GO:0035331">
    <property type="term" value="P:negative regulation of hippo signaling"/>
    <property type="evidence" value="ECO:0000250"/>
    <property type="project" value="UniProtKB"/>
</dbReference>
<dbReference type="GO" id="GO:0033147">
    <property type="term" value="P:negative regulation of intracellular estrogen receptor signaling pathway"/>
    <property type="evidence" value="ECO:0000318"/>
    <property type="project" value="GO_Central"/>
</dbReference>
<dbReference type="GO" id="GO:0000122">
    <property type="term" value="P:negative regulation of transcription by RNA polymerase II"/>
    <property type="evidence" value="ECO:0000250"/>
    <property type="project" value="UniProtKB"/>
</dbReference>
<dbReference type="GO" id="GO:0045944">
    <property type="term" value="P:positive regulation of transcription by RNA polymerase II"/>
    <property type="evidence" value="ECO:0000250"/>
    <property type="project" value="UniProtKB"/>
</dbReference>
<dbReference type="CDD" id="cd00200">
    <property type="entry name" value="WD40"/>
    <property type="match status" value="1"/>
</dbReference>
<dbReference type="FunFam" id="1.20.5.300:FF:000001">
    <property type="entry name" value="striatin isoform X1"/>
    <property type="match status" value="1"/>
</dbReference>
<dbReference type="FunFam" id="2.130.10.10:FF:000616">
    <property type="entry name" value="Striatin-3 isoform B"/>
    <property type="match status" value="1"/>
</dbReference>
<dbReference type="FunFam" id="2.130.10.10:FF:000110">
    <property type="entry name" value="striatin-3 isoform X2"/>
    <property type="match status" value="1"/>
</dbReference>
<dbReference type="FunFam" id="2.130.10.10:FF:000134">
    <property type="entry name" value="striatin-3 isoform X2"/>
    <property type="match status" value="1"/>
</dbReference>
<dbReference type="Gene3D" id="1.20.5.300">
    <property type="match status" value="1"/>
</dbReference>
<dbReference type="Gene3D" id="2.130.10.10">
    <property type="entry name" value="YVTN repeat-like/Quinoprotein amine dehydrogenase"/>
    <property type="match status" value="3"/>
</dbReference>
<dbReference type="InterPro" id="IPR020472">
    <property type="entry name" value="G-protein_beta_WD-40_rep"/>
</dbReference>
<dbReference type="InterPro" id="IPR013258">
    <property type="entry name" value="Striatin_N"/>
</dbReference>
<dbReference type="InterPro" id="IPR015943">
    <property type="entry name" value="WD40/YVTN_repeat-like_dom_sf"/>
</dbReference>
<dbReference type="InterPro" id="IPR019775">
    <property type="entry name" value="WD40_repeat_CS"/>
</dbReference>
<dbReference type="InterPro" id="IPR036322">
    <property type="entry name" value="WD40_repeat_dom_sf"/>
</dbReference>
<dbReference type="InterPro" id="IPR001680">
    <property type="entry name" value="WD40_rpt"/>
</dbReference>
<dbReference type="InterPro" id="IPR051488">
    <property type="entry name" value="WD_repeat_striatin"/>
</dbReference>
<dbReference type="PANTHER" id="PTHR15653">
    <property type="entry name" value="STRIATIN"/>
    <property type="match status" value="1"/>
</dbReference>
<dbReference type="PANTHER" id="PTHR15653:SF3">
    <property type="entry name" value="STRIATIN-3"/>
    <property type="match status" value="1"/>
</dbReference>
<dbReference type="Pfam" id="PF08232">
    <property type="entry name" value="Striatin"/>
    <property type="match status" value="1"/>
</dbReference>
<dbReference type="Pfam" id="PF00400">
    <property type="entry name" value="WD40"/>
    <property type="match status" value="5"/>
</dbReference>
<dbReference type="PRINTS" id="PR00320">
    <property type="entry name" value="GPROTEINBRPT"/>
</dbReference>
<dbReference type="SMART" id="SM00320">
    <property type="entry name" value="WD40"/>
    <property type="match status" value="7"/>
</dbReference>
<dbReference type="SUPFAM" id="SSF50978">
    <property type="entry name" value="WD40 repeat-like"/>
    <property type="match status" value="1"/>
</dbReference>
<dbReference type="PROSITE" id="PS00678">
    <property type="entry name" value="WD_REPEATS_1"/>
    <property type="match status" value="2"/>
</dbReference>
<dbReference type="PROSITE" id="PS50082">
    <property type="entry name" value="WD_REPEATS_2"/>
    <property type="match status" value="4"/>
</dbReference>
<dbReference type="PROSITE" id="PS50294">
    <property type="entry name" value="WD_REPEATS_REGION"/>
    <property type="match status" value="1"/>
</dbReference>
<gene>
    <name type="primary">STRN3</name>
</gene>
<organism>
    <name type="scientific">Bos taurus</name>
    <name type="common">Bovine</name>
    <dbReference type="NCBI Taxonomy" id="9913"/>
    <lineage>
        <taxon>Eukaryota</taxon>
        <taxon>Metazoa</taxon>
        <taxon>Chordata</taxon>
        <taxon>Craniata</taxon>
        <taxon>Vertebrata</taxon>
        <taxon>Euteleostomi</taxon>
        <taxon>Mammalia</taxon>
        <taxon>Eutheria</taxon>
        <taxon>Laurasiatheria</taxon>
        <taxon>Artiodactyla</taxon>
        <taxon>Ruminantia</taxon>
        <taxon>Pecora</taxon>
        <taxon>Bovidae</taxon>
        <taxon>Bovinae</taxon>
        <taxon>Bos</taxon>
    </lineage>
</organism>